<organism>
    <name type="scientific">Sus scrofa</name>
    <name type="common">Pig</name>
    <dbReference type="NCBI Taxonomy" id="9823"/>
    <lineage>
        <taxon>Eukaryota</taxon>
        <taxon>Metazoa</taxon>
        <taxon>Chordata</taxon>
        <taxon>Craniata</taxon>
        <taxon>Vertebrata</taxon>
        <taxon>Euteleostomi</taxon>
        <taxon>Mammalia</taxon>
        <taxon>Eutheria</taxon>
        <taxon>Laurasiatheria</taxon>
        <taxon>Artiodactyla</taxon>
        <taxon>Suina</taxon>
        <taxon>Suidae</taxon>
        <taxon>Sus</taxon>
    </lineage>
</organism>
<sequence length="464" mass="51629">MALLTAAARLFGAKNASCLVLAARHASASSTNLKDILADLIPKEQARIKTFRQQHGNTVVGQITVDMMYGGMRGMKGLVYETSVLDPDEGIRFRGYSIPECQKMLPKAKGGEEPLPEGLFWLLVTGQIPTEEQVSWLSKEWAKRAALPSHVVTMLDNFPTNLHPMSQLSAAITALNSESNFARAYAEGIHRTKYWELIYEDCMDLIAKLPCVAAKIYRNLYREGSSIGAIDSKLDWSHNFTNMLGYTDAQFTELMRLYLTIHSDHEGGNVSAHTSHLVGSALSDPYLSFAAAMNGLAGPLHGLANQEVLVWLTQLQKEVGKDVSDEKLRDYIWNTLNSGRVVPGYGHAVLRKTDPRYTCQREFALKHLPHDPMFKLVAQLYKIVPNVLLEQGKAKNPWPNVDAHSGVLLQYYGMTEMNYYTVLFGVSRALGVLAQLIWSRALGFPLERPKSMSTDGLIKLVDSK</sequence>
<protein>
    <recommendedName>
        <fullName>Citrate synthase, mitochondrial</fullName>
        <ecNumber evidence="4">2.3.3.1</ecNumber>
    </recommendedName>
    <alternativeName>
        <fullName>Citrate (Si)-synthase</fullName>
    </alternativeName>
</protein>
<reference key="1">
    <citation type="journal article" date="1988" name="Biochemistry">
        <title>Isolation, nucleotide sequence, and expression of a cDNA encoding pig citrate synthase.</title>
        <authorList>
            <person name="Evans C.T."/>
            <person name="Owens D.D."/>
            <person name="Sumegi B."/>
            <person name="Kispal G."/>
            <person name="Srere P.A."/>
        </authorList>
    </citation>
    <scope>NUCLEOTIDE SEQUENCE [MRNA]</scope>
</reference>
<reference key="2">
    <citation type="journal article" date="1982" name="Biochemistry">
        <title>Complete amino acid sequence of porcine heart citrate synthase.</title>
        <authorList>
            <person name="Bloxham D.P."/>
            <person name="Parmelee D.C."/>
            <person name="Kumar S."/>
            <person name="Walsh K.A."/>
            <person name="Titani K."/>
        </authorList>
    </citation>
    <scope>PROTEIN SEQUENCE OF 28-464</scope>
    <scope>METHYLATION AT LYS-395</scope>
</reference>
<reference key="3">
    <citation type="journal article" date="1990" name="Biochemistry">
        <title>Mutation of essential catalytic residues in pig citrate synthase.</title>
        <authorList>
            <person name="Alter G.M."/>
            <person name="Casazza J.P."/>
            <person name="Zhi W."/>
            <person name="Nemeth P."/>
            <person name="Srere P.A."/>
            <person name="Evans C.T."/>
        </authorList>
    </citation>
    <scope>CATALYTIC ACTIVITY</scope>
    <scope>BIOPHYSICOCHEMICAL PROPERTIES</scope>
    <scope>MUTAGENESIS OF HIS-301 AND ASP-402</scope>
</reference>
<reference evidence="9 10" key="4">
    <citation type="journal article" date="1982" name="J. Mol. Biol.">
        <title>Crystallographic refinement and atomic models of two different forms of citrate synthase at 2.7- and 1.7-A resolution.</title>
        <authorList>
            <person name="Remington S."/>
            <person name="Wiegand G."/>
            <person name="Huber R."/>
        </authorList>
    </citation>
    <scope>X-RAY CRYSTALLOGRAPHY (1.7 ANGSTROMS)</scope>
    <scope>SUBUNIT</scope>
</reference>
<reference evidence="11" key="5">
    <citation type="journal article" date="2019" name="Biol. Chem.">
        <title>Comparative studies of Aspergillus fumigatus 2-methylcitrate synthase and human citrate synthase.</title>
        <authorList>
            <person name="Schlachter C.R."/>
            <person name="Klapper V."/>
            <person name="Radford T."/>
            <person name="Chruszcz M."/>
        </authorList>
    </citation>
    <scope>X-RAY CRYSTALLOGRAPHY (1.60 ANGSTROMS)</scope>
    <scope>SUBUNIT</scope>
</reference>
<evidence type="ECO:0000250" key="1">
    <source>
        <dbReference type="UniProtKB" id="O75390"/>
    </source>
</evidence>
<evidence type="ECO:0000250" key="2">
    <source>
        <dbReference type="UniProtKB" id="Q29RK1"/>
    </source>
</evidence>
<evidence type="ECO:0000250" key="3">
    <source>
        <dbReference type="UniProtKB" id="Q9CZU6"/>
    </source>
</evidence>
<evidence type="ECO:0000269" key="4">
    <source>
    </source>
</evidence>
<evidence type="ECO:0000269" key="5">
    <source>
    </source>
</evidence>
<evidence type="ECO:0000269" key="6">
    <source>
    </source>
</evidence>
<evidence type="ECO:0000269" key="7">
    <source>
    </source>
</evidence>
<evidence type="ECO:0000305" key="8"/>
<evidence type="ECO:0007744" key="9">
    <source>
        <dbReference type="PDB" id="1CTS"/>
    </source>
</evidence>
<evidence type="ECO:0007744" key="10">
    <source>
        <dbReference type="PDB" id="2CTS"/>
    </source>
</evidence>
<evidence type="ECO:0007744" key="11">
    <source>
        <dbReference type="PDB" id="5UQS"/>
    </source>
</evidence>
<evidence type="ECO:0007829" key="12">
    <source>
        <dbReference type="PDB" id="1CTS"/>
    </source>
</evidence>
<evidence type="ECO:0007829" key="13">
    <source>
        <dbReference type="PDB" id="2CTS"/>
    </source>
</evidence>
<evidence type="ECO:0007829" key="14">
    <source>
        <dbReference type="PDB" id="3ENJ"/>
    </source>
</evidence>
<evidence type="ECO:0007829" key="15">
    <source>
        <dbReference type="PDB" id="4CTS"/>
    </source>
</evidence>
<evidence type="ECO:0007829" key="16">
    <source>
        <dbReference type="PDB" id="5UQS"/>
    </source>
</evidence>
<dbReference type="EC" id="2.3.3.1" evidence="4"/>
<dbReference type="EMBL" id="M21197">
    <property type="protein sequence ID" value="AAA31017.1"/>
    <property type="molecule type" value="mRNA"/>
</dbReference>
<dbReference type="PIR" id="A29966">
    <property type="entry name" value="YKPG"/>
</dbReference>
<dbReference type="RefSeq" id="NP_999441.1">
    <property type="nucleotide sequence ID" value="NM_214276.1"/>
</dbReference>
<dbReference type="PDB" id="1CTS">
    <property type="method" value="X-ray"/>
    <property type="resolution" value="2.70 A"/>
    <property type="chains" value="A=28-464"/>
</dbReference>
<dbReference type="PDB" id="2CTS">
    <property type="method" value="X-ray"/>
    <property type="resolution" value="2.00 A"/>
    <property type="chains" value="A=28-464"/>
</dbReference>
<dbReference type="PDB" id="3ENJ">
    <property type="method" value="X-ray"/>
    <property type="resolution" value="1.78 A"/>
    <property type="chains" value="A=28-464"/>
</dbReference>
<dbReference type="PDB" id="4CTS">
    <property type="method" value="X-ray"/>
    <property type="resolution" value="2.90 A"/>
    <property type="chains" value="A/B=28-464"/>
</dbReference>
<dbReference type="PDB" id="5UQS">
    <property type="method" value="X-ray"/>
    <property type="resolution" value="1.60 A"/>
    <property type="chains" value="A/C=1-464"/>
</dbReference>
<dbReference type="PDBsum" id="1CTS"/>
<dbReference type="PDBsum" id="2CTS"/>
<dbReference type="PDBsum" id="3ENJ"/>
<dbReference type="PDBsum" id="4CTS"/>
<dbReference type="PDBsum" id="5UQS"/>
<dbReference type="PCDDB" id="P00889"/>
<dbReference type="SMR" id="P00889"/>
<dbReference type="BioGRID" id="1149646">
    <property type="interactions" value="2"/>
</dbReference>
<dbReference type="FunCoup" id="P00889">
    <property type="interactions" value="1642"/>
</dbReference>
<dbReference type="STRING" id="9823.ENSSSCP00000056310"/>
<dbReference type="iPTMnet" id="P00889"/>
<dbReference type="PaxDb" id="9823-ENSSSCP00000021332"/>
<dbReference type="PeptideAtlas" id="P00889"/>
<dbReference type="Ensembl" id="ENSSSCT00000045632.3">
    <property type="protein sequence ID" value="ENSSSCP00000056310.2"/>
    <property type="gene ID" value="ENSSSCG00000035686.3"/>
</dbReference>
<dbReference type="Ensembl" id="ENSSSCT00015100520.1">
    <property type="protein sequence ID" value="ENSSSCP00015041581.1"/>
    <property type="gene ID" value="ENSSSCG00015074449.1"/>
</dbReference>
<dbReference type="Ensembl" id="ENSSSCT00070059648.1">
    <property type="protein sequence ID" value="ENSSSCP00070050810.1"/>
    <property type="gene ID" value="ENSSSCG00070029675.1"/>
</dbReference>
<dbReference type="Ensembl" id="ENSSSCT00085008744">
    <property type="protein sequence ID" value="ENSSSCP00085006222"/>
    <property type="gene ID" value="ENSSSCG00085004692"/>
</dbReference>
<dbReference type="Ensembl" id="ENSSSCT00090021835">
    <property type="protein sequence ID" value="ENSSSCP00090013378"/>
    <property type="gene ID" value="ENSSSCG00090012425"/>
</dbReference>
<dbReference type="Ensembl" id="ENSSSCT00105077513">
    <property type="protein sequence ID" value="ENSSSCP00105054832"/>
    <property type="gene ID" value="ENSSSCG00105040664"/>
</dbReference>
<dbReference type="Ensembl" id="ENSSSCT00110071959">
    <property type="protein sequence ID" value="ENSSSCP00110050659"/>
    <property type="gene ID" value="ENSSSCG00110037814"/>
</dbReference>
<dbReference type="Ensembl" id="ENSSSCT00115035464">
    <property type="protein sequence ID" value="ENSSSCP00115033638"/>
    <property type="gene ID" value="ENSSSCG00115020022"/>
</dbReference>
<dbReference type="Ensembl" id="ENSSSCT00130034891">
    <property type="protein sequence ID" value="ENSSSCP00130024253"/>
    <property type="gene ID" value="ENSSSCG00130017844"/>
</dbReference>
<dbReference type="GeneID" id="397519"/>
<dbReference type="KEGG" id="ssc:397519"/>
<dbReference type="CTD" id="1431"/>
<dbReference type="VGNC" id="VGNC:103225">
    <property type="gene designation" value="CS"/>
</dbReference>
<dbReference type="eggNOG" id="KOG2617">
    <property type="taxonomic scope" value="Eukaryota"/>
</dbReference>
<dbReference type="GeneTree" id="ENSGT00390000006813"/>
<dbReference type="HOGENOM" id="CLU_087652_0_0_1"/>
<dbReference type="InParanoid" id="P00889"/>
<dbReference type="OrthoDB" id="8017587at2759"/>
<dbReference type="BRENDA" id="2.3.3.1">
    <property type="organism ID" value="6170"/>
</dbReference>
<dbReference type="BRENDA" id="2.3.3.16">
    <property type="organism ID" value="6170"/>
</dbReference>
<dbReference type="Reactome" id="R-SSC-71403">
    <property type="pathway name" value="Citric acid cycle (TCA cycle)"/>
</dbReference>
<dbReference type="Reactome" id="R-SSC-9837999">
    <property type="pathway name" value="Mitochondrial protein degradation"/>
</dbReference>
<dbReference type="Reactome" id="R-SSC-9854311">
    <property type="pathway name" value="Maturation of TCA enzymes and regulation of TCA cycle"/>
</dbReference>
<dbReference type="SABIO-RK" id="P00889"/>
<dbReference type="UniPathway" id="UPA00223">
    <property type="reaction ID" value="UER00717"/>
</dbReference>
<dbReference type="EvolutionaryTrace" id="P00889"/>
<dbReference type="Proteomes" id="UP000008227">
    <property type="component" value="Chromosome 5"/>
</dbReference>
<dbReference type="Proteomes" id="UP000314985">
    <property type="component" value="Chromosome 5"/>
</dbReference>
<dbReference type="Proteomes" id="UP000694570">
    <property type="component" value="Unplaced"/>
</dbReference>
<dbReference type="Proteomes" id="UP000694571">
    <property type="component" value="Unplaced"/>
</dbReference>
<dbReference type="Proteomes" id="UP000694720">
    <property type="component" value="Unplaced"/>
</dbReference>
<dbReference type="Proteomes" id="UP000694722">
    <property type="component" value="Unplaced"/>
</dbReference>
<dbReference type="Proteomes" id="UP000694723">
    <property type="component" value="Unplaced"/>
</dbReference>
<dbReference type="Proteomes" id="UP000694724">
    <property type="component" value="Unplaced"/>
</dbReference>
<dbReference type="Proteomes" id="UP000694725">
    <property type="component" value="Unplaced"/>
</dbReference>
<dbReference type="Proteomes" id="UP000694726">
    <property type="component" value="Unplaced"/>
</dbReference>
<dbReference type="Proteomes" id="UP000694727">
    <property type="component" value="Unplaced"/>
</dbReference>
<dbReference type="Proteomes" id="UP000694728">
    <property type="component" value="Unplaced"/>
</dbReference>
<dbReference type="Bgee" id="ENSSSCG00000035686">
    <property type="expression patterns" value="Expressed in psoas major muscle and 42 other cell types or tissues"/>
</dbReference>
<dbReference type="ExpressionAtlas" id="P00889">
    <property type="expression patterns" value="baseline and differential"/>
</dbReference>
<dbReference type="GO" id="GO:0005759">
    <property type="term" value="C:mitochondrial matrix"/>
    <property type="evidence" value="ECO:0000250"/>
    <property type="project" value="UniProtKB"/>
</dbReference>
<dbReference type="GO" id="GO:0004108">
    <property type="term" value="F:citrate (Si)-synthase activity"/>
    <property type="evidence" value="ECO:0000250"/>
    <property type="project" value="UniProtKB"/>
</dbReference>
<dbReference type="GO" id="GO:0036440">
    <property type="term" value="F:citrate synthase activity"/>
    <property type="evidence" value="ECO:0000314"/>
    <property type="project" value="CAFA"/>
</dbReference>
<dbReference type="GO" id="GO:0042802">
    <property type="term" value="F:identical protein binding"/>
    <property type="evidence" value="ECO:0000250"/>
    <property type="project" value="UniProtKB"/>
</dbReference>
<dbReference type="GO" id="GO:0005975">
    <property type="term" value="P:carbohydrate metabolic process"/>
    <property type="evidence" value="ECO:0000250"/>
    <property type="project" value="UniProtKB"/>
</dbReference>
<dbReference type="GO" id="GO:0006101">
    <property type="term" value="P:citrate metabolic process"/>
    <property type="evidence" value="ECO:0007669"/>
    <property type="project" value="InterPro"/>
</dbReference>
<dbReference type="GO" id="GO:0006099">
    <property type="term" value="P:tricarboxylic acid cycle"/>
    <property type="evidence" value="ECO:0000318"/>
    <property type="project" value="GO_Central"/>
</dbReference>
<dbReference type="CDD" id="cd06105">
    <property type="entry name" value="ScCit1-2_like"/>
    <property type="match status" value="1"/>
</dbReference>
<dbReference type="FunFam" id="1.10.230.10:FF:000001">
    <property type="entry name" value="Citrate synthase"/>
    <property type="match status" value="1"/>
</dbReference>
<dbReference type="FunFam" id="1.10.580.10:FF:000001">
    <property type="entry name" value="Citrate synthase"/>
    <property type="match status" value="1"/>
</dbReference>
<dbReference type="Gene3D" id="1.10.580.10">
    <property type="entry name" value="Citrate Synthase, domain 1"/>
    <property type="match status" value="1"/>
</dbReference>
<dbReference type="Gene3D" id="1.10.230.10">
    <property type="entry name" value="Cytochrome P450-Terp, domain 2"/>
    <property type="match status" value="1"/>
</dbReference>
<dbReference type="InterPro" id="IPR016142">
    <property type="entry name" value="Citrate_synth-like_lrg_a-sub"/>
</dbReference>
<dbReference type="InterPro" id="IPR016143">
    <property type="entry name" value="Citrate_synth-like_sm_a-sub"/>
</dbReference>
<dbReference type="InterPro" id="IPR002020">
    <property type="entry name" value="Citrate_synthase"/>
</dbReference>
<dbReference type="InterPro" id="IPR019810">
    <property type="entry name" value="Citrate_synthase_AS"/>
</dbReference>
<dbReference type="InterPro" id="IPR010109">
    <property type="entry name" value="Citrate_synthase_euk"/>
</dbReference>
<dbReference type="InterPro" id="IPR036969">
    <property type="entry name" value="Citrate_synthase_sf"/>
</dbReference>
<dbReference type="NCBIfam" id="TIGR01793">
    <property type="entry name" value="cit_synth_euk"/>
    <property type="match status" value="1"/>
</dbReference>
<dbReference type="NCBIfam" id="NF007128">
    <property type="entry name" value="PRK09569.1"/>
    <property type="match status" value="1"/>
</dbReference>
<dbReference type="PANTHER" id="PTHR11739">
    <property type="entry name" value="CITRATE SYNTHASE"/>
    <property type="match status" value="1"/>
</dbReference>
<dbReference type="PANTHER" id="PTHR11739:SF8">
    <property type="entry name" value="CITRATE SYNTHASE, MITOCHONDRIAL"/>
    <property type="match status" value="1"/>
</dbReference>
<dbReference type="Pfam" id="PF00285">
    <property type="entry name" value="Citrate_synt"/>
    <property type="match status" value="1"/>
</dbReference>
<dbReference type="PRINTS" id="PR00143">
    <property type="entry name" value="CITRTSNTHASE"/>
</dbReference>
<dbReference type="SUPFAM" id="SSF48256">
    <property type="entry name" value="Citrate synthase"/>
    <property type="match status" value="1"/>
</dbReference>
<dbReference type="PROSITE" id="PS00480">
    <property type="entry name" value="CITRATE_SYNTHASE"/>
    <property type="match status" value="1"/>
</dbReference>
<feature type="transit peptide" description="Mitochondrion" evidence="6">
    <location>
        <begin position="1"/>
        <end position="27"/>
    </location>
</feature>
<feature type="chain" id="PRO_0000005473" description="Citrate synthase, mitochondrial">
    <location>
        <begin position="28"/>
        <end position="464"/>
    </location>
</feature>
<feature type="short sequence motif" description="SIFI-degron" evidence="1">
    <location>
        <begin position="2"/>
        <end position="21"/>
    </location>
</feature>
<feature type="active site">
    <location>
        <position position="301"/>
    </location>
</feature>
<feature type="active site">
    <location>
        <position position="347"/>
    </location>
</feature>
<feature type="active site">
    <location>
        <position position="402"/>
    </location>
</feature>
<feature type="binding site" description="in chain A" evidence="1">
    <location>
        <position position="356"/>
    </location>
    <ligand>
        <name>oxaloacetate</name>
        <dbReference type="ChEBI" id="CHEBI:16452"/>
        <note>ligand shared between homodimeric partners</note>
    </ligand>
</feature>
<feature type="binding site" description="in chain A" evidence="1">
    <location>
        <position position="428"/>
    </location>
    <ligand>
        <name>oxaloacetate</name>
        <dbReference type="ChEBI" id="CHEBI:16452"/>
        <note>ligand shared between homodimeric partners</note>
    </ligand>
</feature>
<feature type="binding site" description="in chain B" evidence="1">
    <location>
        <position position="448"/>
    </location>
    <ligand>
        <name>oxaloacetate</name>
        <dbReference type="ChEBI" id="CHEBI:16452"/>
        <note>ligand shared between homodimeric partners</note>
    </ligand>
</feature>
<feature type="modified residue" description="N6-acetyllysine; alternate" evidence="2">
    <location>
        <position position="76"/>
    </location>
</feature>
<feature type="modified residue" description="N6-succinyllysine; alternate" evidence="2">
    <location>
        <position position="76"/>
    </location>
</feature>
<feature type="modified residue" description="N6-succinyllysine" evidence="3">
    <location>
        <position position="103"/>
    </location>
</feature>
<feature type="modified residue" description="N6-succinyllysine" evidence="3">
    <location>
        <position position="193"/>
    </location>
</feature>
<feature type="modified residue" description="Phosphoserine" evidence="3">
    <location>
        <position position="226"/>
    </location>
</feature>
<feature type="modified residue" description="N6-acetyllysine; alternate" evidence="3">
    <location>
        <position position="321"/>
    </location>
</feature>
<feature type="modified residue" description="N6-succinyllysine; alternate" evidence="3">
    <location>
        <position position="321"/>
    </location>
</feature>
<feature type="modified residue" description="N6-acetyllysine; alternate" evidence="1">
    <location>
        <position position="327"/>
    </location>
</feature>
<feature type="modified residue" description="N6-succinyllysine; alternate" evidence="3">
    <location>
        <position position="327"/>
    </location>
</feature>
<feature type="modified residue" description="N6-acetyllysine; alternate" evidence="1">
    <location>
        <position position="375"/>
    </location>
</feature>
<feature type="modified residue" description="N6-succinyllysine; alternate" evidence="3">
    <location>
        <position position="375"/>
    </location>
</feature>
<feature type="modified residue" description="N6-acetyllysine" evidence="1">
    <location>
        <position position="382"/>
    </location>
</feature>
<feature type="modified residue" description="N6-acetyllysine; alternate" evidence="1">
    <location>
        <position position="393"/>
    </location>
</feature>
<feature type="modified residue" description="N6-succinyllysine; alternate" evidence="3">
    <location>
        <position position="393"/>
    </location>
</feature>
<feature type="modified residue" description="N6,N6,N6-trimethyllysine" evidence="6">
    <location>
        <position position="395"/>
    </location>
</feature>
<feature type="modified residue" description="N6-succinyllysine" evidence="3">
    <location>
        <position position="450"/>
    </location>
</feature>
<feature type="modified residue" description="N6-acetyllysine; alternate" evidence="3">
    <location>
        <position position="459"/>
    </location>
</feature>
<feature type="modified residue" description="N6-succinyllysine; alternate" evidence="3">
    <location>
        <position position="459"/>
    </location>
</feature>
<feature type="mutagenesis site" description="Greatly reduces catalytic activity." evidence="4">
    <original>H</original>
    <variation>G</variation>
    <variation>R</variation>
    <location>
        <position position="301"/>
    </location>
</feature>
<feature type="mutagenesis site" description="Greatly reduces catalytic activity." evidence="4">
    <original>D</original>
    <variation>G</variation>
    <variation>E</variation>
    <location>
        <position position="402"/>
    </location>
</feature>
<feature type="mutagenesis site" description="Abolishes catalytic activity." evidence="4">
    <original>D</original>
    <variation>N</variation>
    <variation>Q</variation>
    <location>
        <position position="402"/>
    </location>
</feature>
<feature type="helix" evidence="16">
    <location>
        <begin position="33"/>
        <end position="55"/>
    </location>
</feature>
<feature type="strand" evidence="16">
    <location>
        <begin position="59"/>
        <end position="64"/>
    </location>
</feature>
<feature type="helix" evidence="16">
    <location>
        <begin position="65"/>
        <end position="69"/>
    </location>
</feature>
<feature type="turn" evidence="16">
    <location>
        <begin position="70"/>
        <end position="74"/>
    </location>
</feature>
<feature type="strand" evidence="16">
    <location>
        <begin position="76"/>
        <end position="79"/>
    </location>
</feature>
<feature type="strand" evidence="16">
    <location>
        <begin position="82"/>
        <end position="86"/>
    </location>
</feature>
<feature type="turn" evidence="16">
    <location>
        <begin position="87"/>
        <end position="89"/>
    </location>
</feature>
<feature type="strand" evidence="16">
    <location>
        <begin position="90"/>
        <end position="93"/>
    </location>
</feature>
<feature type="helix" evidence="16">
    <location>
        <begin position="98"/>
        <end position="104"/>
    </location>
</feature>
<feature type="strand" evidence="15">
    <location>
        <begin position="109"/>
        <end position="111"/>
    </location>
</feature>
<feature type="strand" evidence="13">
    <location>
        <begin position="112"/>
        <end position="114"/>
    </location>
</feature>
<feature type="helix" evidence="16">
    <location>
        <begin position="116"/>
        <end position="125"/>
    </location>
</feature>
<feature type="helix" evidence="16">
    <location>
        <begin position="131"/>
        <end position="143"/>
    </location>
</feature>
<feature type="helix" evidence="16">
    <location>
        <begin position="149"/>
        <end position="157"/>
    </location>
</feature>
<feature type="strand" evidence="13">
    <location>
        <begin position="160"/>
        <end position="162"/>
    </location>
</feature>
<feature type="helix" evidence="16">
    <location>
        <begin position="164"/>
        <end position="174"/>
    </location>
</feature>
<feature type="helix" evidence="16">
    <location>
        <begin position="175"/>
        <end position="178"/>
    </location>
</feature>
<feature type="helix" evidence="16">
    <location>
        <begin position="180"/>
        <end position="187"/>
    </location>
</feature>
<feature type="helix" evidence="16">
    <location>
        <begin position="191"/>
        <end position="193"/>
    </location>
</feature>
<feature type="helix" evidence="16">
    <location>
        <begin position="194"/>
        <end position="221"/>
    </location>
</feature>
<feature type="strand" evidence="12">
    <location>
        <begin position="232"/>
        <end position="234"/>
    </location>
</feature>
<feature type="helix" evidence="16">
    <location>
        <begin position="236"/>
        <end position="244"/>
    </location>
</feature>
<feature type="helix" evidence="16">
    <location>
        <begin position="249"/>
        <end position="261"/>
    </location>
</feature>
<feature type="turn" evidence="13">
    <location>
        <begin position="266"/>
        <end position="268"/>
    </location>
</feature>
<feature type="helix" evidence="16">
    <location>
        <begin position="270"/>
        <end position="280"/>
    </location>
</feature>
<feature type="helix" evidence="16">
    <location>
        <begin position="285"/>
        <end position="296"/>
    </location>
</feature>
<feature type="helix" evidence="16">
    <location>
        <begin position="299"/>
        <end position="302"/>
    </location>
</feature>
<feature type="helix" evidence="16">
    <location>
        <begin position="304"/>
        <end position="319"/>
    </location>
</feature>
<feature type="helix" evidence="16">
    <location>
        <begin position="325"/>
        <end position="337"/>
    </location>
</feature>
<feature type="strand" evidence="14">
    <location>
        <begin position="345"/>
        <end position="349"/>
    </location>
</feature>
<feature type="helix" evidence="16">
    <location>
        <begin position="355"/>
        <end position="367"/>
    </location>
</feature>
<feature type="helix" evidence="16">
    <location>
        <begin position="372"/>
        <end position="391"/>
    </location>
</feature>
<feature type="strand" evidence="14">
    <location>
        <begin position="394"/>
        <end position="399"/>
    </location>
</feature>
<feature type="helix" evidence="16">
    <location>
        <begin position="401"/>
        <end position="403"/>
    </location>
</feature>
<feature type="helix" evidence="16">
    <location>
        <begin position="405"/>
        <end position="411"/>
    </location>
</feature>
<feature type="helix" evidence="16">
    <location>
        <begin position="417"/>
        <end position="419"/>
    </location>
</feature>
<feature type="helix" evidence="16">
    <location>
        <begin position="420"/>
        <end position="441"/>
    </location>
</feature>
<feature type="strand" evidence="16">
    <location>
        <begin position="450"/>
        <end position="452"/>
    </location>
</feature>
<feature type="helix" evidence="16">
    <location>
        <begin position="454"/>
        <end position="463"/>
    </location>
</feature>
<gene>
    <name type="primary">CS</name>
</gene>
<name>CISY_PIG</name>
<proteinExistence type="evidence at protein level"/>
<accession>P00889</accession>
<comment type="function">
    <text evidence="8">Key enzyme of the Krebs tricarboxylic acid cycle which catalyzes the synthesis of citrate from acetyl coenzyme A and oxaloacetate.</text>
</comment>
<comment type="catalytic activity">
    <reaction evidence="4">
        <text>oxaloacetate + acetyl-CoA + H2O = citrate + CoA + H(+)</text>
        <dbReference type="Rhea" id="RHEA:16845"/>
        <dbReference type="ChEBI" id="CHEBI:15377"/>
        <dbReference type="ChEBI" id="CHEBI:15378"/>
        <dbReference type="ChEBI" id="CHEBI:16452"/>
        <dbReference type="ChEBI" id="CHEBI:16947"/>
        <dbReference type="ChEBI" id="CHEBI:57287"/>
        <dbReference type="ChEBI" id="CHEBI:57288"/>
        <dbReference type="EC" id="2.3.3.1"/>
    </reaction>
</comment>
<comment type="biophysicochemical properties">
    <kinetics>
        <KM evidence="4">6 uM for oxaloacetate</KM>
        <KM evidence="4">16.3 uM for acetyl-coA</KM>
    </kinetics>
</comment>
<comment type="pathway">
    <text>Carbohydrate metabolism; tricarboxylic acid cycle; isocitrate from oxaloacetate: step 1/2.</text>
</comment>
<comment type="subunit">
    <text evidence="5 7">Homodimer.</text>
</comment>
<comment type="subcellular location">
    <subcellularLocation>
        <location>Mitochondrion matrix</location>
    </subcellularLocation>
</comment>
<comment type="PTM">
    <text evidence="1 6">Methylated (PubMed:7093227). Trimethylation at Lys-395 by CSKMT decreases citrate synthase activity (By similarity).</text>
</comment>
<comment type="PTM">
    <text evidence="1">In response to mitochondrial stress, the precursor protein is ubiquitinated by the SIFI complex in the cytoplasm before mitochondrial import, leading to its degradation. Within the SIFI complex, UBR4 initiates ubiquitin chain that are further elongated or branched by KCMF1.</text>
</comment>
<comment type="miscellaneous">
    <text>Citrate synthase is found in nearly all cells capable of oxidative metabolism.</text>
</comment>
<comment type="similarity">
    <text evidence="8">Belongs to the citrate synthase family.</text>
</comment>
<keyword id="KW-0002">3D-structure</keyword>
<keyword id="KW-0007">Acetylation</keyword>
<keyword id="KW-0903">Direct protein sequencing</keyword>
<keyword id="KW-0488">Methylation</keyword>
<keyword id="KW-0496">Mitochondrion</keyword>
<keyword id="KW-0597">Phosphoprotein</keyword>
<keyword id="KW-1185">Reference proteome</keyword>
<keyword id="KW-0808">Transferase</keyword>
<keyword id="KW-0809">Transit peptide</keyword>
<keyword id="KW-0816">Tricarboxylic acid cycle</keyword>
<keyword id="KW-0832">Ubl conjugation</keyword>